<accession>C5BPQ2</accession>
<protein>
    <recommendedName>
        <fullName evidence="1">Large ribosomal subunit protein uL11</fullName>
    </recommendedName>
    <alternativeName>
        <fullName evidence="2">50S ribosomal protein L11</fullName>
    </alternativeName>
</protein>
<comment type="function">
    <text evidence="1">Forms part of the ribosomal stalk which helps the ribosome interact with GTP-bound translation factors.</text>
</comment>
<comment type="subunit">
    <text evidence="1">Part of the ribosomal stalk of the 50S ribosomal subunit. Interacts with L10 and the large rRNA to form the base of the stalk. L10 forms an elongated spine to which L12 dimers bind in a sequential fashion forming a multimeric L10(L12)X complex.</text>
</comment>
<comment type="PTM">
    <text evidence="1">One or more lysine residues are methylated.</text>
</comment>
<comment type="similarity">
    <text evidence="1">Belongs to the universal ribosomal protein uL11 family.</text>
</comment>
<proteinExistence type="inferred from homology"/>
<feature type="chain" id="PRO_1000212794" description="Large ribosomal subunit protein uL11">
    <location>
        <begin position="1"/>
        <end position="143"/>
    </location>
</feature>
<evidence type="ECO:0000255" key="1">
    <source>
        <dbReference type="HAMAP-Rule" id="MF_00736"/>
    </source>
</evidence>
<evidence type="ECO:0000305" key="2"/>
<sequence length="143" mass="14984">MAKKIEAYIKLQVKAGQANPSPPVGPALGQHGVNIMEFCKAFNAQTQGIEPGSPVPVVISVYSDRSFTFAMKTPPASFLLKRAAGIKSGSGRPNTEKVGKVNRAQLEEIATTKMPDLTAADMDAAVRTIAGSARAMGLDVEGV</sequence>
<keyword id="KW-0488">Methylation</keyword>
<keyword id="KW-1185">Reference proteome</keyword>
<keyword id="KW-0687">Ribonucleoprotein</keyword>
<keyword id="KW-0689">Ribosomal protein</keyword>
<keyword id="KW-0694">RNA-binding</keyword>
<keyword id="KW-0699">rRNA-binding</keyword>
<dbReference type="EMBL" id="CP001614">
    <property type="protein sequence ID" value="ACR13165.1"/>
    <property type="molecule type" value="Genomic_DNA"/>
</dbReference>
<dbReference type="RefSeq" id="WP_015819278.1">
    <property type="nucleotide sequence ID" value="NC_012997.1"/>
</dbReference>
<dbReference type="SMR" id="C5BPQ2"/>
<dbReference type="STRING" id="377629.TERTU_0878"/>
<dbReference type="GeneID" id="58408656"/>
<dbReference type="GeneID" id="93857769"/>
<dbReference type="KEGG" id="ttu:TERTU_0878"/>
<dbReference type="eggNOG" id="COG0080">
    <property type="taxonomic scope" value="Bacteria"/>
</dbReference>
<dbReference type="HOGENOM" id="CLU_074237_2_0_6"/>
<dbReference type="OrthoDB" id="9802408at2"/>
<dbReference type="Proteomes" id="UP000009080">
    <property type="component" value="Chromosome"/>
</dbReference>
<dbReference type="GO" id="GO:0022625">
    <property type="term" value="C:cytosolic large ribosomal subunit"/>
    <property type="evidence" value="ECO:0007669"/>
    <property type="project" value="TreeGrafter"/>
</dbReference>
<dbReference type="GO" id="GO:0070180">
    <property type="term" value="F:large ribosomal subunit rRNA binding"/>
    <property type="evidence" value="ECO:0007669"/>
    <property type="project" value="UniProtKB-UniRule"/>
</dbReference>
<dbReference type="GO" id="GO:0003735">
    <property type="term" value="F:structural constituent of ribosome"/>
    <property type="evidence" value="ECO:0007669"/>
    <property type="project" value="InterPro"/>
</dbReference>
<dbReference type="GO" id="GO:0006412">
    <property type="term" value="P:translation"/>
    <property type="evidence" value="ECO:0007669"/>
    <property type="project" value="UniProtKB-UniRule"/>
</dbReference>
<dbReference type="CDD" id="cd00349">
    <property type="entry name" value="Ribosomal_L11"/>
    <property type="match status" value="1"/>
</dbReference>
<dbReference type="FunFam" id="1.10.10.250:FF:000001">
    <property type="entry name" value="50S ribosomal protein L11"/>
    <property type="match status" value="1"/>
</dbReference>
<dbReference type="FunFam" id="3.30.1550.10:FF:000001">
    <property type="entry name" value="50S ribosomal protein L11"/>
    <property type="match status" value="1"/>
</dbReference>
<dbReference type="Gene3D" id="1.10.10.250">
    <property type="entry name" value="Ribosomal protein L11, C-terminal domain"/>
    <property type="match status" value="1"/>
</dbReference>
<dbReference type="Gene3D" id="3.30.1550.10">
    <property type="entry name" value="Ribosomal protein L11/L12, N-terminal domain"/>
    <property type="match status" value="1"/>
</dbReference>
<dbReference type="HAMAP" id="MF_00736">
    <property type="entry name" value="Ribosomal_uL11"/>
    <property type="match status" value="1"/>
</dbReference>
<dbReference type="InterPro" id="IPR000911">
    <property type="entry name" value="Ribosomal_uL11"/>
</dbReference>
<dbReference type="InterPro" id="IPR006519">
    <property type="entry name" value="Ribosomal_uL11_bac-typ"/>
</dbReference>
<dbReference type="InterPro" id="IPR020783">
    <property type="entry name" value="Ribosomal_uL11_C"/>
</dbReference>
<dbReference type="InterPro" id="IPR036769">
    <property type="entry name" value="Ribosomal_uL11_C_sf"/>
</dbReference>
<dbReference type="InterPro" id="IPR020784">
    <property type="entry name" value="Ribosomal_uL11_N"/>
</dbReference>
<dbReference type="InterPro" id="IPR036796">
    <property type="entry name" value="Ribosomal_uL11_N_sf"/>
</dbReference>
<dbReference type="NCBIfam" id="TIGR01632">
    <property type="entry name" value="L11_bact"/>
    <property type="match status" value="1"/>
</dbReference>
<dbReference type="PANTHER" id="PTHR11661">
    <property type="entry name" value="60S RIBOSOMAL PROTEIN L12"/>
    <property type="match status" value="1"/>
</dbReference>
<dbReference type="PANTHER" id="PTHR11661:SF1">
    <property type="entry name" value="LARGE RIBOSOMAL SUBUNIT PROTEIN UL11M"/>
    <property type="match status" value="1"/>
</dbReference>
<dbReference type="Pfam" id="PF00298">
    <property type="entry name" value="Ribosomal_L11"/>
    <property type="match status" value="1"/>
</dbReference>
<dbReference type="Pfam" id="PF03946">
    <property type="entry name" value="Ribosomal_L11_N"/>
    <property type="match status" value="1"/>
</dbReference>
<dbReference type="SMART" id="SM00649">
    <property type="entry name" value="RL11"/>
    <property type="match status" value="1"/>
</dbReference>
<dbReference type="SUPFAM" id="SSF54747">
    <property type="entry name" value="Ribosomal L11/L12e N-terminal domain"/>
    <property type="match status" value="1"/>
</dbReference>
<dbReference type="SUPFAM" id="SSF46906">
    <property type="entry name" value="Ribosomal protein L11, C-terminal domain"/>
    <property type="match status" value="1"/>
</dbReference>
<name>RL11_TERTT</name>
<reference key="1">
    <citation type="journal article" date="2009" name="PLoS ONE">
        <title>The complete genome of Teredinibacter turnerae T7901: an intracellular endosymbiont of marine wood-boring bivalves (shipworms).</title>
        <authorList>
            <person name="Yang J.C."/>
            <person name="Madupu R."/>
            <person name="Durkin A.S."/>
            <person name="Ekborg N.A."/>
            <person name="Pedamallu C.S."/>
            <person name="Hostetler J.B."/>
            <person name="Radune D."/>
            <person name="Toms B.S."/>
            <person name="Henrissat B."/>
            <person name="Coutinho P.M."/>
            <person name="Schwarz S."/>
            <person name="Field L."/>
            <person name="Trindade-Silva A.E."/>
            <person name="Soares C.A.G."/>
            <person name="Elshahawi S."/>
            <person name="Hanora A."/>
            <person name="Schmidt E.W."/>
            <person name="Haygood M.G."/>
            <person name="Posfai J."/>
            <person name="Benner J."/>
            <person name="Madinger C."/>
            <person name="Nove J."/>
            <person name="Anton B."/>
            <person name="Chaudhary K."/>
            <person name="Foster J."/>
            <person name="Holman A."/>
            <person name="Kumar S."/>
            <person name="Lessard P.A."/>
            <person name="Luyten Y.A."/>
            <person name="Slatko B."/>
            <person name="Wood N."/>
            <person name="Wu B."/>
            <person name="Teplitski M."/>
            <person name="Mougous J.D."/>
            <person name="Ward N."/>
            <person name="Eisen J.A."/>
            <person name="Badger J.H."/>
            <person name="Distel D.L."/>
        </authorList>
    </citation>
    <scope>NUCLEOTIDE SEQUENCE [LARGE SCALE GENOMIC DNA]</scope>
    <source>
        <strain>ATCC 39867 / T7901</strain>
    </source>
</reference>
<gene>
    <name evidence="1" type="primary">rplK</name>
    <name type="ordered locus">TERTU_0878</name>
</gene>
<organism>
    <name type="scientific">Teredinibacter turnerae (strain ATCC 39867 / T7901)</name>
    <dbReference type="NCBI Taxonomy" id="377629"/>
    <lineage>
        <taxon>Bacteria</taxon>
        <taxon>Pseudomonadati</taxon>
        <taxon>Pseudomonadota</taxon>
        <taxon>Gammaproteobacteria</taxon>
        <taxon>Cellvibrionales</taxon>
        <taxon>Cellvibrionaceae</taxon>
        <taxon>Teredinibacter</taxon>
    </lineage>
</organism>